<feature type="initiator methionine" description="Removed" evidence="1">
    <location>
        <position position="1"/>
    </location>
</feature>
<feature type="chain" id="PRO_0000430752" description="2-haloacrylate reductase" evidence="1">
    <location>
        <begin position="2"/>
        <end position="333"/>
    </location>
</feature>
<feature type="binding site" evidence="2">
    <location>
        <begin position="153"/>
        <end position="159"/>
    </location>
    <ligand>
        <name>NADP(+)</name>
        <dbReference type="ChEBI" id="CHEBI:58349"/>
    </ligand>
</feature>
<feature type="strand" evidence="5">
    <location>
        <begin position="3"/>
        <end position="9"/>
    </location>
</feature>
<feature type="helix" evidence="5">
    <location>
        <begin position="13"/>
        <end position="15"/>
    </location>
</feature>
<feature type="strand" evidence="5">
    <location>
        <begin position="16"/>
        <end position="20"/>
    </location>
</feature>
<feature type="strand" evidence="5">
    <location>
        <begin position="30"/>
        <end position="40"/>
    </location>
</feature>
<feature type="helix" evidence="5">
    <location>
        <begin position="42"/>
        <end position="48"/>
    </location>
</feature>
<feature type="strand" evidence="5">
    <location>
        <begin position="67"/>
        <end position="75"/>
    </location>
</feature>
<feature type="strand" evidence="5">
    <location>
        <begin position="87"/>
        <end position="90"/>
    </location>
</feature>
<feature type="strand" evidence="5">
    <location>
        <begin position="92"/>
        <end position="94"/>
    </location>
</feature>
<feature type="strand" evidence="5">
    <location>
        <begin position="98"/>
        <end position="105"/>
    </location>
</feature>
<feature type="helix" evidence="5">
    <location>
        <begin position="106"/>
        <end position="108"/>
    </location>
</feature>
<feature type="helix" evidence="5">
    <location>
        <begin position="120"/>
        <end position="138"/>
    </location>
</feature>
<feature type="strand" evidence="5">
    <location>
        <begin position="148"/>
        <end position="151"/>
    </location>
</feature>
<feature type="turn" evidence="5">
    <location>
        <begin position="152"/>
        <end position="155"/>
    </location>
</feature>
<feature type="helix" evidence="5">
    <location>
        <begin position="159"/>
        <end position="168"/>
    </location>
</feature>
<feature type="strand" evidence="5">
    <location>
        <begin position="172"/>
        <end position="179"/>
    </location>
</feature>
<feature type="helix" evidence="5">
    <location>
        <begin position="180"/>
        <end position="189"/>
    </location>
</feature>
<feature type="strand" evidence="5">
    <location>
        <begin position="192"/>
        <end position="196"/>
    </location>
</feature>
<feature type="turn" evidence="5">
    <location>
        <begin position="197"/>
        <end position="199"/>
    </location>
</feature>
<feature type="helix" evidence="5">
    <location>
        <begin position="202"/>
        <end position="210"/>
    </location>
</feature>
<feature type="strand" evidence="5">
    <location>
        <begin position="215"/>
        <end position="220"/>
    </location>
</feature>
<feature type="turn" evidence="5">
    <location>
        <begin position="224"/>
        <end position="226"/>
    </location>
</feature>
<feature type="helix" evidence="5">
    <location>
        <begin position="227"/>
        <end position="232"/>
    </location>
</feature>
<feature type="strand" evidence="5">
    <location>
        <begin position="234"/>
        <end position="242"/>
    </location>
</feature>
<feature type="helix" evidence="5">
    <location>
        <begin position="255"/>
        <end position="258"/>
    </location>
</feature>
<feature type="turn" evidence="5">
    <location>
        <begin position="259"/>
        <end position="263"/>
    </location>
</feature>
<feature type="strand" evidence="5">
    <location>
        <begin position="266"/>
        <end position="268"/>
    </location>
</feature>
<feature type="helix" evidence="5">
    <location>
        <begin position="272"/>
        <end position="275"/>
    </location>
</feature>
<feature type="helix" evidence="5">
    <location>
        <begin position="279"/>
        <end position="294"/>
    </location>
</feature>
<feature type="strand" evidence="5">
    <location>
        <begin position="302"/>
        <end position="307"/>
    </location>
</feature>
<feature type="helix" evidence="5">
    <location>
        <begin position="308"/>
        <end position="310"/>
    </location>
</feature>
<feature type="helix" evidence="5">
    <location>
        <begin position="311"/>
        <end position="320"/>
    </location>
</feature>
<feature type="strand" evidence="5">
    <location>
        <begin position="325"/>
        <end position="330"/>
    </location>
</feature>
<sequence length="333" mass="35784">MVMAAVIHKKGGPDNFVWEEVKVGSPGPGQVRLRNTAIGVNFLDTYHRAGIPHPLVVGEPPIVVGFEAAAVVEEVGPGVTDFTVGERVCTCLPPLGAYSQERLYPAEKLIKVPKDLDLDDVHLAGLMLKGMTAQYLLHQTHKVKPGDYVLIHAAAGGMGHIMVPWARHLGATVIGTVSTEEKAETARKLGCHHTINYSTQDFAEVVREITGGKGVDVVYDSIGKDTLQKSLDCLRPRGMCAAYGHASGVADPIRVVEDLGVRGSLFITRPALWHYMSNRSEIDEGSKCLFDAVKAGVLHSSVAKTFPLREAAAAHKYMGGRQTIGSIVLLPQA</sequence>
<evidence type="ECO:0000269" key="1">
    <source>
    </source>
</evidence>
<evidence type="ECO:0000303" key="2">
    <source>
    </source>
</evidence>
<evidence type="ECO:0000305" key="3"/>
<evidence type="ECO:0000312" key="4">
    <source>
        <dbReference type="EMBL" id="BAD91551.1"/>
    </source>
</evidence>
<evidence type="ECO:0007829" key="5">
    <source>
        <dbReference type="PDB" id="1WLY"/>
    </source>
</evidence>
<keyword id="KW-0002">3D-structure</keyword>
<keyword id="KW-0903">Direct protein sequencing</keyword>
<keyword id="KW-0521">NADP</keyword>
<keyword id="KW-0560">Oxidoreductase</keyword>
<dbReference type="EC" id="1.3.1.103" evidence="1"/>
<dbReference type="EMBL" id="AB196962">
    <property type="protein sequence ID" value="BAD91551.1"/>
    <property type="molecule type" value="Genomic_DNA"/>
</dbReference>
<dbReference type="PDB" id="1WLY">
    <property type="method" value="X-ray"/>
    <property type="resolution" value="1.30 A"/>
    <property type="chains" value="A=1-333"/>
</dbReference>
<dbReference type="PDBsum" id="1WLY"/>
<dbReference type="SMR" id="Q59I44"/>
<dbReference type="KEGG" id="ag:BAD91551"/>
<dbReference type="BioCyc" id="MetaCyc:MONOMER-18421"/>
<dbReference type="BRENDA" id="1.3.1.103">
    <property type="organism ID" value="1033"/>
</dbReference>
<dbReference type="EvolutionaryTrace" id="Q59I44"/>
<dbReference type="GO" id="GO:0005829">
    <property type="term" value="C:cytosol"/>
    <property type="evidence" value="ECO:0007669"/>
    <property type="project" value="TreeGrafter"/>
</dbReference>
<dbReference type="GO" id="GO:0102523">
    <property type="term" value="F:2-chloroacrylate reductase activity"/>
    <property type="evidence" value="ECO:0007669"/>
    <property type="project" value="UniProtKB-EC"/>
</dbReference>
<dbReference type="GO" id="GO:0035925">
    <property type="term" value="F:mRNA 3'-UTR AU-rich region binding"/>
    <property type="evidence" value="ECO:0007669"/>
    <property type="project" value="TreeGrafter"/>
</dbReference>
<dbReference type="GO" id="GO:0070402">
    <property type="term" value="F:NADPH binding"/>
    <property type="evidence" value="ECO:0007669"/>
    <property type="project" value="TreeGrafter"/>
</dbReference>
<dbReference type="GO" id="GO:0003960">
    <property type="term" value="F:NADPH:quinone reductase activity"/>
    <property type="evidence" value="ECO:0007669"/>
    <property type="project" value="InterPro"/>
</dbReference>
<dbReference type="GO" id="GO:0016628">
    <property type="term" value="F:oxidoreductase activity, acting on the CH-CH group of donors, NAD or NADP as acceptor"/>
    <property type="evidence" value="ECO:0000314"/>
    <property type="project" value="UniProtKB"/>
</dbReference>
<dbReference type="GO" id="GO:0042206">
    <property type="term" value="P:halogenated hydrocarbon catabolic process"/>
    <property type="evidence" value="ECO:0000314"/>
    <property type="project" value="UniProtKB"/>
</dbReference>
<dbReference type="CDD" id="cd05286">
    <property type="entry name" value="QOR2"/>
    <property type="match status" value="1"/>
</dbReference>
<dbReference type="FunFam" id="3.40.50.720:FF:000053">
    <property type="entry name" value="Quinone oxidoreductase 1"/>
    <property type="match status" value="1"/>
</dbReference>
<dbReference type="Gene3D" id="3.90.180.10">
    <property type="entry name" value="Medium-chain alcohol dehydrogenases, catalytic domain"/>
    <property type="match status" value="1"/>
</dbReference>
<dbReference type="Gene3D" id="3.40.50.720">
    <property type="entry name" value="NAD(P)-binding Rossmann-like Domain"/>
    <property type="match status" value="1"/>
</dbReference>
<dbReference type="InterPro" id="IPR013149">
    <property type="entry name" value="ADH-like_C"/>
</dbReference>
<dbReference type="InterPro" id="IPR013154">
    <property type="entry name" value="ADH-like_N"/>
</dbReference>
<dbReference type="InterPro" id="IPR011032">
    <property type="entry name" value="GroES-like_sf"/>
</dbReference>
<dbReference type="InterPro" id="IPR036291">
    <property type="entry name" value="NAD(P)-bd_dom_sf"/>
</dbReference>
<dbReference type="InterPro" id="IPR020843">
    <property type="entry name" value="PKS_ER"/>
</dbReference>
<dbReference type="InterPro" id="IPR047618">
    <property type="entry name" value="QOR-like"/>
</dbReference>
<dbReference type="PANTHER" id="PTHR48106">
    <property type="entry name" value="QUINONE OXIDOREDUCTASE PIG3-RELATED"/>
    <property type="match status" value="1"/>
</dbReference>
<dbReference type="PANTHER" id="PTHR48106:SF13">
    <property type="entry name" value="QUINONE OXIDOREDUCTASE-RELATED"/>
    <property type="match status" value="1"/>
</dbReference>
<dbReference type="Pfam" id="PF08240">
    <property type="entry name" value="ADH_N"/>
    <property type="match status" value="1"/>
</dbReference>
<dbReference type="Pfam" id="PF00107">
    <property type="entry name" value="ADH_zinc_N"/>
    <property type="match status" value="1"/>
</dbReference>
<dbReference type="SMART" id="SM00829">
    <property type="entry name" value="PKS_ER"/>
    <property type="match status" value="1"/>
</dbReference>
<dbReference type="SUPFAM" id="SSF50129">
    <property type="entry name" value="GroES-like"/>
    <property type="match status" value="1"/>
</dbReference>
<dbReference type="SUPFAM" id="SSF51735">
    <property type="entry name" value="NAD(P)-binding Rossmann-fold domains"/>
    <property type="match status" value="1"/>
</dbReference>
<proteinExistence type="evidence at protein level"/>
<reference key="1">
    <citation type="journal article" date="2005" name="J. Biol. Chem.">
        <title>2-Haloacrylate reductase, a novel enzyme of the medium chain dehydrogenase/reductase superfamily that catalyzes the reduction of a carbon-carbon double bond of unsaturated organohalogen compounds.</title>
        <authorList>
            <person name="Kurata A."/>
            <person name="Kurihara T."/>
            <person name="Kamachi H."/>
            <person name="Esaki N."/>
        </authorList>
    </citation>
    <scope>NUCLEOTIDE SEQUENCE [GENOMIC DNA]</scope>
    <scope>PROTEIN SEQUENCE OF 2-17 AND 115-129</scope>
    <scope>X-RAY CRYSTALLOGRAPHY (1.30 ANGSTROMS)</scope>
    <scope>FUNCTION</scope>
    <scope>CATALYTIC ACTIVITY</scope>
    <scope>BIOTECHNOLOGY</scope>
    <source>
        <strain evidence="4">WS</strain>
    </source>
</reference>
<name>CAA43_BURSP</name>
<organism>
    <name type="scientific">Burkholderia sp</name>
    <dbReference type="NCBI Taxonomy" id="36773"/>
    <lineage>
        <taxon>Bacteria</taxon>
        <taxon>Pseudomonadati</taxon>
        <taxon>Pseudomonadota</taxon>
        <taxon>Betaproteobacteria</taxon>
        <taxon>Burkholderiales</taxon>
        <taxon>Burkholderiaceae</taxon>
        <taxon>Burkholderia</taxon>
    </lineage>
</organism>
<comment type="function">
    <text evidence="1">Involved in the degradation of unsaturated organohalogen compounds. Catalyzes the NADPH-dependent reduction of the carbon-carbon double bond of 2-chloroacrylate to produce (S)-2-chloropropionate, which is probably further metabolized to (R)-lactate by (S)-2-haloacid dehalogenase. Can also use 2-bromoacrylate as substrate. Does not act on acrylate, methacrylate, 1,4-benzoquinone and 1,4-naphthoquinone.</text>
</comment>
<comment type="catalytic activity">
    <reaction evidence="1">
        <text>(S)-2-chloropropanoate + NADP(+) = 2-chloroacrylate + NADPH + H(+)</text>
        <dbReference type="Rhea" id="RHEA:36591"/>
        <dbReference type="ChEBI" id="CHEBI:15378"/>
        <dbReference type="ChEBI" id="CHEBI:57783"/>
        <dbReference type="ChEBI" id="CHEBI:58349"/>
        <dbReference type="ChEBI" id="CHEBI:73934"/>
        <dbReference type="ChEBI" id="CHEBI:73935"/>
        <dbReference type="EC" id="1.3.1.103"/>
    </reaction>
</comment>
<comment type="biotechnology">
    <text evidence="2">(S)-2-chloropropionate is used in a large quantity as a synthetic precursor for the industrial production of aryloxyphenoxypropionic acid herbicides.</text>
</comment>
<comment type="similarity">
    <text evidence="3">Belongs to the zinc-containing alcohol dehydrogenase family.</text>
</comment>
<accession>Q59I44</accession>
<protein>
    <recommendedName>
        <fullName evidence="2">2-haloacrylate reductase</fullName>
        <ecNumber evidence="1">1.3.1.103</ecNumber>
    </recommendedName>
</protein>
<gene>
    <name evidence="2" type="primary">caa43</name>
</gene>